<feature type="chain" id="PRO_1000089243" description="UPF0060 membrane protein YnfA">
    <location>
        <begin position="1"/>
        <end position="108"/>
    </location>
</feature>
<feature type="topological domain" description="Periplasmic" evidence="1">
    <location>
        <begin position="1"/>
        <end position="5"/>
    </location>
</feature>
<feature type="transmembrane region" description="Helical" evidence="1">
    <location>
        <begin position="6"/>
        <end position="26"/>
    </location>
</feature>
<feature type="topological domain" description="Cytoplasmic" evidence="1">
    <location>
        <begin position="27"/>
        <end position="30"/>
    </location>
</feature>
<feature type="transmembrane region" description="Helical" evidence="1">
    <location>
        <begin position="31"/>
        <end position="51"/>
    </location>
</feature>
<feature type="topological domain" description="Periplasmic" evidence="1">
    <location>
        <begin position="52"/>
        <end position="60"/>
    </location>
</feature>
<feature type="transmembrane region" description="Helical" evidence="1">
    <location>
        <begin position="61"/>
        <end position="81"/>
    </location>
</feature>
<feature type="topological domain" description="Cytoplasmic" evidence="1">
    <location>
        <begin position="82"/>
        <end position="84"/>
    </location>
</feature>
<feature type="transmembrane region" description="Helical" evidence="1">
    <location>
        <begin position="85"/>
        <end position="105"/>
    </location>
</feature>
<feature type="topological domain" description="Periplasmic" evidence="1">
    <location>
        <begin position="106"/>
        <end position="108"/>
    </location>
</feature>
<proteinExistence type="inferred from homology"/>
<sequence length="108" mass="11920">MIKTTLLFFATALCEIIGCFLPWLWLKRNASIWLLLPAGISLALFVWLLTLHPAASGRVYAAYGGVYVCTALMWLRVVDGVKLTLYDWTGALIALCGMLIIVAGWGRT</sequence>
<name>YNFA_ECOSE</name>
<dbReference type="EMBL" id="AP009240">
    <property type="protein sequence ID" value="BAG77227.1"/>
    <property type="molecule type" value="Genomic_DNA"/>
</dbReference>
<dbReference type="RefSeq" id="WP_000598292.1">
    <property type="nucleotide sequence ID" value="NC_011415.1"/>
</dbReference>
<dbReference type="SMR" id="B6IB16"/>
<dbReference type="KEGG" id="ecy:ECSE_1703"/>
<dbReference type="HOGENOM" id="CLU_117653_2_1_6"/>
<dbReference type="Proteomes" id="UP000008199">
    <property type="component" value="Chromosome"/>
</dbReference>
<dbReference type="GO" id="GO:0005886">
    <property type="term" value="C:plasma membrane"/>
    <property type="evidence" value="ECO:0007669"/>
    <property type="project" value="UniProtKB-SubCell"/>
</dbReference>
<dbReference type="HAMAP" id="MF_00010">
    <property type="entry name" value="UPF0060"/>
    <property type="match status" value="1"/>
</dbReference>
<dbReference type="InterPro" id="IPR003844">
    <property type="entry name" value="UPF0060"/>
</dbReference>
<dbReference type="NCBIfam" id="NF002586">
    <property type="entry name" value="PRK02237.1"/>
    <property type="match status" value="1"/>
</dbReference>
<dbReference type="PANTHER" id="PTHR36116">
    <property type="entry name" value="UPF0060 MEMBRANE PROTEIN YNFA"/>
    <property type="match status" value="1"/>
</dbReference>
<dbReference type="PANTHER" id="PTHR36116:SF1">
    <property type="entry name" value="UPF0060 MEMBRANE PROTEIN YNFA"/>
    <property type="match status" value="1"/>
</dbReference>
<dbReference type="Pfam" id="PF02694">
    <property type="entry name" value="UPF0060"/>
    <property type="match status" value="1"/>
</dbReference>
<dbReference type="SUPFAM" id="SSF103481">
    <property type="entry name" value="Multidrug resistance efflux transporter EmrE"/>
    <property type="match status" value="1"/>
</dbReference>
<reference key="1">
    <citation type="journal article" date="2008" name="DNA Res.">
        <title>Complete genome sequence and comparative analysis of the wild-type commensal Escherichia coli strain SE11 isolated from a healthy adult.</title>
        <authorList>
            <person name="Oshima K."/>
            <person name="Toh H."/>
            <person name="Ogura Y."/>
            <person name="Sasamoto H."/>
            <person name="Morita H."/>
            <person name="Park S.-H."/>
            <person name="Ooka T."/>
            <person name="Iyoda S."/>
            <person name="Taylor T.D."/>
            <person name="Hayashi T."/>
            <person name="Itoh K."/>
            <person name="Hattori M."/>
        </authorList>
    </citation>
    <scope>NUCLEOTIDE SEQUENCE [LARGE SCALE GENOMIC DNA]</scope>
    <source>
        <strain>SE11</strain>
    </source>
</reference>
<gene>
    <name evidence="1" type="primary">ynfA</name>
    <name type="ordered locus">ECSE_1703</name>
</gene>
<protein>
    <recommendedName>
        <fullName evidence="1">UPF0060 membrane protein YnfA</fullName>
    </recommendedName>
</protein>
<accession>B6IB16</accession>
<evidence type="ECO:0000255" key="1">
    <source>
        <dbReference type="HAMAP-Rule" id="MF_00010"/>
    </source>
</evidence>
<keyword id="KW-0997">Cell inner membrane</keyword>
<keyword id="KW-1003">Cell membrane</keyword>
<keyword id="KW-0472">Membrane</keyword>
<keyword id="KW-0812">Transmembrane</keyword>
<keyword id="KW-1133">Transmembrane helix</keyword>
<comment type="subcellular location">
    <subcellularLocation>
        <location evidence="1">Cell inner membrane</location>
        <topology evidence="1">Multi-pass membrane protein</topology>
    </subcellularLocation>
</comment>
<comment type="similarity">
    <text evidence="1">Belongs to the UPF0060 family.</text>
</comment>
<organism>
    <name type="scientific">Escherichia coli (strain SE11)</name>
    <dbReference type="NCBI Taxonomy" id="409438"/>
    <lineage>
        <taxon>Bacteria</taxon>
        <taxon>Pseudomonadati</taxon>
        <taxon>Pseudomonadota</taxon>
        <taxon>Gammaproteobacteria</taxon>
        <taxon>Enterobacterales</taxon>
        <taxon>Enterobacteriaceae</taxon>
        <taxon>Escherichia</taxon>
    </lineage>
</organism>